<gene>
    <name type="primary">LDJ2</name>
</gene>
<reference key="1">
    <citation type="journal article" date="1994" name="Plant Physiol. Biochem.">
        <title>Cloning of a new isoform of a DnaJ protein from Allium porrum epidermal cells.</title>
        <authorList>
            <person name="Bessoule J.J."/>
            <person name="Testet E."/>
            <person name="Cassagne C."/>
        </authorList>
    </citation>
    <scope>NUCLEOTIDE SEQUENCE [MRNA]</scope>
</reference>
<keyword id="KW-0143">Chaperone</keyword>
<keyword id="KW-0449">Lipoprotein</keyword>
<keyword id="KW-0472">Membrane</keyword>
<keyword id="KW-0479">Metal-binding</keyword>
<keyword id="KW-0488">Methylation</keyword>
<keyword id="KW-0636">Prenylation</keyword>
<keyword id="KW-0677">Repeat</keyword>
<keyword id="KW-0862">Zinc</keyword>
<keyword id="KW-0863">Zinc-finger</keyword>
<proteinExistence type="evidence at transcript level"/>
<protein>
    <recommendedName>
        <fullName>DnaJ protein homolog 2</fullName>
    </recommendedName>
</protein>
<dbReference type="EMBL" id="X77632">
    <property type="protein sequence ID" value="CAA54720.1"/>
    <property type="molecule type" value="mRNA"/>
</dbReference>
<dbReference type="PIR" id="S42031">
    <property type="entry name" value="S42031"/>
</dbReference>
<dbReference type="SMR" id="P42824"/>
<dbReference type="GO" id="GO:0005783">
    <property type="term" value="C:endoplasmic reticulum"/>
    <property type="evidence" value="ECO:0007669"/>
    <property type="project" value="UniProtKB-ARBA"/>
</dbReference>
<dbReference type="GO" id="GO:0016020">
    <property type="term" value="C:membrane"/>
    <property type="evidence" value="ECO:0007669"/>
    <property type="project" value="UniProtKB-SubCell"/>
</dbReference>
<dbReference type="GO" id="GO:0005524">
    <property type="term" value="F:ATP binding"/>
    <property type="evidence" value="ECO:0007669"/>
    <property type="project" value="InterPro"/>
</dbReference>
<dbReference type="GO" id="GO:0030544">
    <property type="term" value="F:Hsp70 protein binding"/>
    <property type="evidence" value="ECO:0007669"/>
    <property type="project" value="InterPro"/>
</dbReference>
<dbReference type="GO" id="GO:0051082">
    <property type="term" value="F:unfolded protein binding"/>
    <property type="evidence" value="ECO:0007669"/>
    <property type="project" value="InterPro"/>
</dbReference>
<dbReference type="GO" id="GO:0008270">
    <property type="term" value="F:zinc ion binding"/>
    <property type="evidence" value="ECO:0007669"/>
    <property type="project" value="UniProtKB-KW"/>
</dbReference>
<dbReference type="GO" id="GO:0006457">
    <property type="term" value="P:protein folding"/>
    <property type="evidence" value="ECO:0007669"/>
    <property type="project" value="InterPro"/>
</dbReference>
<dbReference type="GO" id="GO:0009408">
    <property type="term" value="P:response to heat"/>
    <property type="evidence" value="ECO:0007669"/>
    <property type="project" value="InterPro"/>
</dbReference>
<dbReference type="CDD" id="cd06257">
    <property type="entry name" value="DnaJ"/>
    <property type="match status" value="1"/>
</dbReference>
<dbReference type="CDD" id="cd10747">
    <property type="entry name" value="DnaJ_C"/>
    <property type="match status" value="1"/>
</dbReference>
<dbReference type="CDD" id="cd10719">
    <property type="entry name" value="DnaJ_zf"/>
    <property type="match status" value="1"/>
</dbReference>
<dbReference type="FunFam" id="2.60.260.20:FF:000068">
    <property type="entry name" value="Chaperone protein dnaJ 3"/>
    <property type="match status" value="1"/>
</dbReference>
<dbReference type="FunFam" id="2.60.260.20:FF:000150">
    <property type="entry name" value="Chaperone protein dnaJ 3"/>
    <property type="match status" value="1"/>
</dbReference>
<dbReference type="FunFam" id="1.10.287.110:FF:000012">
    <property type="entry name" value="dnaJ protein homolog"/>
    <property type="match status" value="1"/>
</dbReference>
<dbReference type="FunFam" id="2.10.230.10:FF:000001">
    <property type="entry name" value="DnaJ subfamily A member 2"/>
    <property type="match status" value="1"/>
</dbReference>
<dbReference type="Gene3D" id="1.10.287.110">
    <property type="entry name" value="DnaJ domain"/>
    <property type="match status" value="1"/>
</dbReference>
<dbReference type="Gene3D" id="2.10.230.10">
    <property type="entry name" value="Heat shock protein DnaJ, cysteine-rich domain"/>
    <property type="match status" value="1"/>
</dbReference>
<dbReference type="Gene3D" id="2.60.260.20">
    <property type="entry name" value="Urease metallochaperone UreE, N-terminal domain"/>
    <property type="match status" value="2"/>
</dbReference>
<dbReference type="HAMAP" id="MF_01152">
    <property type="entry name" value="DnaJ"/>
    <property type="match status" value="1"/>
</dbReference>
<dbReference type="InterPro" id="IPR012724">
    <property type="entry name" value="DnaJ"/>
</dbReference>
<dbReference type="InterPro" id="IPR002939">
    <property type="entry name" value="DnaJ_C"/>
</dbReference>
<dbReference type="InterPro" id="IPR001623">
    <property type="entry name" value="DnaJ_domain"/>
</dbReference>
<dbReference type="InterPro" id="IPR018253">
    <property type="entry name" value="DnaJ_domain_CS"/>
</dbReference>
<dbReference type="InterPro" id="IPR044713">
    <property type="entry name" value="DNJA1/2-like"/>
</dbReference>
<dbReference type="InterPro" id="IPR008971">
    <property type="entry name" value="HSP40/DnaJ_pept-bd"/>
</dbReference>
<dbReference type="InterPro" id="IPR001305">
    <property type="entry name" value="HSP_DnaJ_Cys-rich_dom"/>
</dbReference>
<dbReference type="InterPro" id="IPR036410">
    <property type="entry name" value="HSP_DnaJ_Cys-rich_dom_sf"/>
</dbReference>
<dbReference type="InterPro" id="IPR036869">
    <property type="entry name" value="J_dom_sf"/>
</dbReference>
<dbReference type="PANTHER" id="PTHR43888">
    <property type="entry name" value="DNAJ-LIKE-2, ISOFORM A-RELATED"/>
    <property type="match status" value="1"/>
</dbReference>
<dbReference type="Pfam" id="PF00226">
    <property type="entry name" value="DnaJ"/>
    <property type="match status" value="1"/>
</dbReference>
<dbReference type="Pfam" id="PF01556">
    <property type="entry name" value="DnaJ_C"/>
    <property type="match status" value="1"/>
</dbReference>
<dbReference type="Pfam" id="PF00684">
    <property type="entry name" value="DnaJ_CXXCXGXG"/>
    <property type="match status" value="1"/>
</dbReference>
<dbReference type="PRINTS" id="PR00625">
    <property type="entry name" value="JDOMAIN"/>
</dbReference>
<dbReference type="SMART" id="SM00271">
    <property type="entry name" value="DnaJ"/>
    <property type="match status" value="1"/>
</dbReference>
<dbReference type="SUPFAM" id="SSF46565">
    <property type="entry name" value="Chaperone J-domain"/>
    <property type="match status" value="1"/>
</dbReference>
<dbReference type="SUPFAM" id="SSF57938">
    <property type="entry name" value="DnaJ/Hsp40 cysteine-rich domain"/>
    <property type="match status" value="1"/>
</dbReference>
<dbReference type="SUPFAM" id="SSF49493">
    <property type="entry name" value="HSP40/DnaJ peptide-binding domain"/>
    <property type="match status" value="2"/>
</dbReference>
<dbReference type="PROSITE" id="PS00636">
    <property type="entry name" value="DNAJ_1"/>
    <property type="match status" value="1"/>
</dbReference>
<dbReference type="PROSITE" id="PS50076">
    <property type="entry name" value="DNAJ_2"/>
    <property type="match status" value="1"/>
</dbReference>
<dbReference type="PROSITE" id="PS51188">
    <property type="entry name" value="ZF_CR"/>
    <property type="match status" value="1"/>
</dbReference>
<feature type="chain" id="PRO_0000071077" description="DnaJ protein homolog 2">
    <location>
        <begin position="1"/>
        <end position="415"/>
    </location>
</feature>
<feature type="propeptide" id="PRO_0000396763" description="Removed in mature form" evidence="1">
    <location>
        <begin position="416"/>
        <end position="418"/>
    </location>
</feature>
<feature type="domain" description="J">
    <location>
        <begin position="11"/>
        <end position="76"/>
    </location>
</feature>
<feature type="repeat" description="CXXCXGXG motif">
    <location>
        <begin position="148"/>
        <end position="155"/>
    </location>
</feature>
<feature type="repeat" description="CXXCXGXG motif">
    <location>
        <begin position="164"/>
        <end position="171"/>
    </location>
</feature>
<feature type="repeat" description="CXXCXGXG motif">
    <location>
        <begin position="191"/>
        <end position="198"/>
    </location>
</feature>
<feature type="repeat" description="CXXCXGXG motif">
    <location>
        <begin position="207"/>
        <end position="214"/>
    </location>
</feature>
<feature type="zinc finger region" description="CR-type">
    <location>
        <begin position="135"/>
        <end position="219"/>
    </location>
</feature>
<feature type="region of interest" description="Disordered" evidence="2">
    <location>
        <begin position="382"/>
        <end position="418"/>
    </location>
</feature>
<feature type="modified residue" description="Cysteine methyl ester" evidence="1">
    <location>
        <position position="415"/>
    </location>
</feature>
<feature type="lipid moiety-binding region" description="S-farnesyl cysteine" evidence="1">
    <location>
        <position position="415"/>
    </location>
</feature>
<name>DNJH2_ALLPO</name>
<comment type="function">
    <text evidence="1">Plays a continuous role in plant development probably in the structural organization of compartments.</text>
</comment>
<comment type="subcellular location">
    <subcellularLocation>
        <location evidence="3">Membrane</location>
        <topology evidence="3">Lipid-anchor</topology>
    </subcellularLocation>
</comment>
<accession>P42824</accession>
<sequence length="418" mass="46584">MFGRAPKKSDNTKYYEVLGVSKNATPEDLKKAYRKAAIKNHPDKGGDPEKFKEIGQAYEVLNDPEKREIYDQYGEEGLKEGMGGGGGVHDPFDIFQSFFGGGGFGGGGSSRGRRQRRGEDVVHPLKVSLEDLYNGTSKKLSLSRNVLCTKCKGKGSKSGASMNCASCQGSGMKVSIRQLGPGMIQQMQHPCNECKGTGEMISDKDRCPQCKGEKVVQQKKVLEVHVEKGMQNGQKITFPGEADEAPDTVTGDIVFVLQQKEHPKFKRKGDDLFYEHSLSLTEALCGFQFVLTHLDNRQLLIKSNPGEVIKPDQFKGINDEGMPMYQRPFMRGKLYIHFSVDFPDSLTPDQCKALESVLPSRNASRLTDMEIDECEETTMHDVNIEEEMRRKQHQQAQEAYDEDDEGHGGAQRVQCAQQ</sequence>
<organism>
    <name type="scientific">Allium porrum</name>
    <name type="common">Leek</name>
    <name type="synonym">Allium ampeloprasum var. porrum</name>
    <dbReference type="NCBI Taxonomy" id="4681"/>
    <lineage>
        <taxon>Eukaryota</taxon>
        <taxon>Viridiplantae</taxon>
        <taxon>Streptophyta</taxon>
        <taxon>Embryophyta</taxon>
        <taxon>Tracheophyta</taxon>
        <taxon>Spermatophyta</taxon>
        <taxon>Magnoliopsida</taxon>
        <taxon>Liliopsida</taxon>
        <taxon>Asparagales</taxon>
        <taxon>Amaryllidaceae</taxon>
        <taxon>Allioideae</taxon>
        <taxon>Allieae</taxon>
        <taxon>Allium</taxon>
    </lineage>
</organism>
<evidence type="ECO:0000250" key="1"/>
<evidence type="ECO:0000256" key="2">
    <source>
        <dbReference type="SAM" id="MobiDB-lite"/>
    </source>
</evidence>
<evidence type="ECO:0000305" key="3"/>